<organism>
    <name type="scientific">Methylacidiphilum infernorum (isolate V4)</name>
    <name type="common">Methylokorus infernorum (strain V4)</name>
    <dbReference type="NCBI Taxonomy" id="481448"/>
    <lineage>
        <taxon>Bacteria</taxon>
        <taxon>Pseudomonadati</taxon>
        <taxon>Verrucomicrobiota</taxon>
        <taxon>Methylacidiphilae</taxon>
        <taxon>Methylacidiphilales</taxon>
        <taxon>Methylacidiphilaceae</taxon>
        <taxon>Methylacidiphilum (ex Ratnadevi et al. 2023)</taxon>
    </lineage>
</organism>
<comment type="function">
    <text evidence="1">Associates with the EF-Tu.GDP complex and induces the exchange of GDP to GTP. It remains bound to the aminoacyl-tRNA.EF-Tu.GTP complex up to the GTP hydrolysis stage on the ribosome.</text>
</comment>
<comment type="subcellular location">
    <subcellularLocation>
        <location evidence="1">Cytoplasm</location>
    </subcellularLocation>
</comment>
<comment type="similarity">
    <text evidence="1">Belongs to the EF-Ts family.</text>
</comment>
<protein>
    <recommendedName>
        <fullName evidence="1">Elongation factor Ts</fullName>
        <shortName evidence="1">EF-Ts</shortName>
    </recommendedName>
</protein>
<feature type="chain" id="PRO_1000202246" description="Elongation factor Ts">
    <location>
        <begin position="1"/>
        <end position="201"/>
    </location>
</feature>
<feature type="region of interest" description="Involved in Mg(2+) ion dislocation from EF-Tu" evidence="1">
    <location>
        <begin position="83"/>
        <end position="86"/>
    </location>
</feature>
<reference key="1">
    <citation type="journal article" date="2008" name="Biol. Direct">
        <title>Complete genome sequence of the extremely acidophilic methanotroph isolate V4, Methylacidiphilum infernorum, a representative of the bacterial phylum Verrucomicrobia.</title>
        <authorList>
            <person name="Hou S."/>
            <person name="Makarova K.S."/>
            <person name="Saw J.H."/>
            <person name="Senin P."/>
            <person name="Ly B.V."/>
            <person name="Zhou Z."/>
            <person name="Ren Y."/>
            <person name="Wang J."/>
            <person name="Galperin M.Y."/>
            <person name="Omelchenko M.V."/>
            <person name="Wolf Y.I."/>
            <person name="Yutin N."/>
            <person name="Koonin E.V."/>
            <person name="Stott M.B."/>
            <person name="Mountain B.W."/>
            <person name="Crowe M.A."/>
            <person name="Smirnova A.V."/>
            <person name="Dunfield P.F."/>
            <person name="Feng L."/>
            <person name="Wang L."/>
            <person name="Alam M."/>
        </authorList>
    </citation>
    <scope>NUCLEOTIDE SEQUENCE [LARGE SCALE GENOMIC DNA]</scope>
    <source>
        <strain>Isolate V4</strain>
    </source>
</reference>
<proteinExistence type="inferred from homology"/>
<name>EFTS_METI4</name>
<sequence length="201" mass="22703">MANSLSVHLVKELREKTGAAIMDCKKALEVSKGDIDEAEKWLRQQGIAKAKKKSERLTPEGVIASYIHAGDKIGVLVEVNCETDFVARTPTFKELAKEVAIQIAAASPRFLSKEDIPKEVLDEERQKIIESLKGQNKEDLDKVVQEKLEKFIVDSCLLEQPFVKDQSITVRDLICQRIAQIGENIVVRRFVRFQLGEEIEN</sequence>
<keyword id="KW-0963">Cytoplasm</keyword>
<keyword id="KW-0251">Elongation factor</keyword>
<keyword id="KW-0648">Protein biosynthesis</keyword>
<dbReference type="EMBL" id="CP000975">
    <property type="protein sequence ID" value="ACD82423.1"/>
    <property type="molecule type" value="Genomic_DNA"/>
</dbReference>
<dbReference type="RefSeq" id="WP_012462705.1">
    <property type="nucleotide sequence ID" value="NC_010794.1"/>
</dbReference>
<dbReference type="SMR" id="B3DYQ1"/>
<dbReference type="STRING" id="481448.Minf_0365"/>
<dbReference type="KEGG" id="min:Minf_0365"/>
<dbReference type="eggNOG" id="COG0264">
    <property type="taxonomic scope" value="Bacteria"/>
</dbReference>
<dbReference type="HOGENOM" id="CLU_047155_1_1_0"/>
<dbReference type="OrthoDB" id="9808348at2"/>
<dbReference type="Proteomes" id="UP000009149">
    <property type="component" value="Chromosome"/>
</dbReference>
<dbReference type="GO" id="GO:0005737">
    <property type="term" value="C:cytoplasm"/>
    <property type="evidence" value="ECO:0007669"/>
    <property type="project" value="UniProtKB-SubCell"/>
</dbReference>
<dbReference type="GO" id="GO:0003746">
    <property type="term" value="F:translation elongation factor activity"/>
    <property type="evidence" value="ECO:0007669"/>
    <property type="project" value="UniProtKB-UniRule"/>
</dbReference>
<dbReference type="CDD" id="cd14275">
    <property type="entry name" value="UBA_EF-Ts"/>
    <property type="match status" value="1"/>
</dbReference>
<dbReference type="FunFam" id="1.10.8.10:FF:000001">
    <property type="entry name" value="Elongation factor Ts"/>
    <property type="match status" value="1"/>
</dbReference>
<dbReference type="Gene3D" id="1.10.286.20">
    <property type="match status" value="1"/>
</dbReference>
<dbReference type="Gene3D" id="1.10.8.10">
    <property type="entry name" value="DNA helicase RuvA subunit, C-terminal domain"/>
    <property type="match status" value="1"/>
</dbReference>
<dbReference type="Gene3D" id="3.30.479.20">
    <property type="entry name" value="Elongation factor Ts, dimerisation domain"/>
    <property type="match status" value="1"/>
</dbReference>
<dbReference type="HAMAP" id="MF_00050">
    <property type="entry name" value="EF_Ts"/>
    <property type="match status" value="1"/>
</dbReference>
<dbReference type="InterPro" id="IPR036402">
    <property type="entry name" value="EF-Ts_dimer_sf"/>
</dbReference>
<dbReference type="InterPro" id="IPR001816">
    <property type="entry name" value="Transl_elong_EFTs/EF1B"/>
</dbReference>
<dbReference type="InterPro" id="IPR014039">
    <property type="entry name" value="Transl_elong_EFTs/EF1B_dimer"/>
</dbReference>
<dbReference type="InterPro" id="IPR018101">
    <property type="entry name" value="Transl_elong_Ts_CS"/>
</dbReference>
<dbReference type="InterPro" id="IPR009060">
    <property type="entry name" value="UBA-like_sf"/>
</dbReference>
<dbReference type="NCBIfam" id="TIGR00116">
    <property type="entry name" value="tsf"/>
    <property type="match status" value="1"/>
</dbReference>
<dbReference type="PANTHER" id="PTHR11741">
    <property type="entry name" value="ELONGATION FACTOR TS"/>
    <property type="match status" value="1"/>
</dbReference>
<dbReference type="PANTHER" id="PTHR11741:SF0">
    <property type="entry name" value="ELONGATION FACTOR TS, MITOCHONDRIAL"/>
    <property type="match status" value="1"/>
</dbReference>
<dbReference type="Pfam" id="PF25025">
    <property type="entry name" value="EF-Ts_N"/>
    <property type="match status" value="1"/>
</dbReference>
<dbReference type="Pfam" id="PF00889">
    <property type="entry name" value="EF_TS"/>
    <property type="match status" value="1"/>
</dbReference>
<dbReference type="SUPFAM" id="SSF54713">
    <property type="entry name" value="Elongation factor Ts (EF-Ts), dimerisation domain"/>
    <property type="match status" value="1"/>
</dbReference>
<dbReference type="SUPFAM" id="SSF46934">
    <property type="entry name" value="UBA-like"/>
    <property type="match status" value="1"/>
</dbReference>
<dbReference type="PROSITE" id="PS01126">
    <property type="entry name" value="EF_TS_1"/>
    <property type="match status" value="1"/>
</dbReference>
<dbReference type="PROSITE" id="PS01127">
    <property type="entry name" value="EF_TS_2"/>
    <property type="match status" value="1"/>
</dbReference>
<gene>
    <name evidence="1" type="primary">tsf</name>
    <name type="ordered locus">Minf_0365</name>
</gene>
<evidence type="ECO:0000255" key="1">
    <source>
        <dbReference type="HAMAP-Rule" id="MF_00050"/>
    </source>
</evidence>
<accession>B3DYQ1</accession>